<comment type="function">
    <text evidence="1">Forms part of the ribosomal stalk which helps the ribosome interact with GTP-bound translation factors. Is thus essential for accurate translation.</text>
</comment>
<comment type="subunit">
    <text evidence="1">Homodimer. Part of the ribosomal stalk of the 50S ribosomal subunit. Forms a multimeric L10(L12)X complex, where L10 forms an elongated spine to which 2 to 4 L12 dimers bind in a sequential fashion. Binds GTP-bound translation factors.</text>
</comment>
<comment type="similarity">
    <text evidence="1">Belongs to the bacterial ribosomal protein bL12 family.</text>
</comment>
<dbReference type="EMBL" id="CP000685">
    <property type="protein sequence ID" value="ABQ04974.1"/>
    <property type="molecule type" value="Genomic_DNA"/>
</dbReference>
<dbReference type="RefSeq" id="WP_008466917.1">
    <property type="nucleotide sequence ID" value="NZ_MUGZ01000012.1"/>
</dbReference>
<dbReference type="SMR" id="A5FIJ2"/>
<dbReference type="STRING" id="376686.Fjoh_1942"/>
<dbReference type="KEGG" id="fjo:Fjoh_1942"/>
<dbReference type="eggNOG" id="COG0222">
    <property type="taxonomic scope" value="Bacteria"/>
</dbReference>
<dbReference type="HOGENOM" id="CLU_086499_3_1_10"/>
<dbReference type="OrthoDB" id="9811748at2"/>
<dbReference type="Proteomes" id="UP000006694">
    <property type="component" value="Chromosome"/>
</dbReference>
<dbReference type="GO" id="GO:0022625">
    <property type="term" value="C:cytosolic large ribosomal subunit"/>
    <property type="evidence" value="ECO:0007669"/>
    <property type="project" value="TreeGrafter"/>
</dbReference>
<dbReference type="GO" id="GO:0003729">
    <property type="term" value="F:mRNA binding"/>
    <property type="evidence" value="ECO:0007669"/>
    <property type="project" value="TreeGrafter"/>
</dbReference>
<dbReference type="GO" id="GO:0003735">
    <property type="term" value="F:structural constituent of ribosome"/>
    <property type="evidence" value="ECO:0007669"/>
    <property type="project" value="InterPro"/>
</dbReference>
<dbReference type="GO" id="GO:0006412">
    <property type="term" value="P:translation"/>
    <property type="evidence" value="ECO:0007669"/>
    <property type="project" value="UniProtKB-UniRule"/>
</dbReference>
<dbReference type="CDD" id="cd00387">
    <property type="entry name" value="Ribosomal_L7_L12"/>
    <property type="match status" value="1"/>
</dbReference>
<dbReference type="FunFam" id="1.20.5.710:FF:000011">
    <property type="entry name" value="50S ribosomal protein L7/L12"/>
    <property type="match status" value="1"/>
</dbReference>
<dbReference type="FunFam" id="3.30.1390.10:FF:000001">
    <property type="entry name" value="50S ribosomal protein L7/L12"/>
    <property type="match status" value="1"/>
</dbReference>
<dbReference type="Gene3D" id="3.30.1390.10">
    <property type="match status" value="1"/>
</dbReference>
<dbReference type="Gene3D" id="1.20.5.710">
    <property type="entry name" value="Single helix bin"/>
    <property type="match status" value="1"/>
</dbReference>
<dbReference type="HAMAP" id="MF_00368">
    <property type="entry name" value="Ribosomal_bL12"/>
    <property type="match status" value="1"/>
</dbReference>
<dbReference type="InterPro" id="IPR000206">
    <property type="entry name" value="Ribosomal_bL12"/>
</dbReference>
<dbReference type="InterPro" id="IPR013823">
    <property type="entry name" value="Ribosomal_bL12_C"/>
</dbReference>
<dbReference type="InterPro" id="IPR014719">
    <property type="entry name" value="Ribosomal_bL12_C/ClpS-like"/>
</dbReference>
<dbReference type="InterPro" id="IPR008932">
    <property type="entry name" value="Ribosomal_bL12_oligo"/>
</dbReference>
<dbReference type="InterPro" id="IPR036235">
    <property type="entry name" value="Ribosomal_bL12_oligo_N_sf"/>
</dbReference>
<dbReference type="NCBIfam" id="TIGR00855">
    <property type="entry name" value="L12"/>
    <property type="match status" value="1"/>
</dbReference>
<dbReference type="PANTHER" id="PTHR45987">
    <property type="entry name" value="39S RIBOSOMAL PROTEIN L12"/>
    <property type="match status" value="1"/>
</dbReference>
<dbReference type="PANTHER" id="PTHR45987:SF4">
    <property type="entry name" value="LARGE RIBOSOMAL SUBUNIT PROTEIN BL12M"/>
    <property type="match status" value="1"/>
</dbReference>
<dbReference type="Pfam" id="PF00542">
    <property type="entry name" value="Ribosomal_L12"/>
    <property type="match status" value="1"/>
</dbReference>
<dbReference type="Pfam" id="PF16320">
    <property type="entry name" value="Ribosomal_L12_N"/>
    <property type="match status" value="1"/>
</dbReference>
<dbReference type="SUPFAM" id="SSF54736">
    <property type="entry name" value="ClpS-like"/>
    <property type="match status" value="1"/>
</dbReference>
<dbReference type="SUPFAM" id="SSF48300">
    <property type="entry name" value="Ribosomal protein L7/12, oligomerisation (N-terminal) domain"/>
    <property type="match status" value="1"/>
</dbReference>
<evidence type="ECO:0000255" key="1">
    <source>
        <dbReference type="HAMAP-Rule" id="MF_00368"/>
    </source>
</evidence>
<evidence type="ECO:0000256" key="2">
    <source>
        <dbReference type="SAM" id="MobiDB-lite"/>
    </source>
</evidence>
<evidence type="ECO:0000305" key="3"/>
<keyword id="KW-0687">Ribonucleoprotein</keyword>
<keyword id="KW-0689">Ribosomal protein</keyword>
<gene>
    <name evidence="1" type="primary">rplL</name>
    <name type="ordered locus">Fjoh_1942</name>
</gene>
<reference key="1">
    <citation type="journal article" date="2009" name="Appl. Environ. Microbiol.">
        <title>Novel features of the polysaccharide-digesting gliding bacterium Flavobacterium johnsoniae as revealed by genome sequence analysis.</title>
        <authorList>
            <person name="McBride M.J."/>
            <person name="Xie G."/>
            <person name="Martens E.C."/>
            <person name="Lapidus A."/>
            <person name="Henrissat B."/>
            <person name="Rhodes R.G."/>
            <person name="Goltsman E."/>
            <person name="Wang W."/>
            <person name="Xu J."/>
            <person name="Hunnicutt D.W."/>
            <person name="Staroscik A.M."/>
            <person name="Hoover T.R."/>
            <person name="Cheng Y.Q."/>
            <person name="Stein J.L."/>
        </authorList>
    </citation>
    <scope>NUCLEOTIDE SEQUENCE [LARGE SCALE GENOMIC DNA]</scope>
    <source>
        <strain>ATCC 17061 / DSM 2064 / JCM 8514 / BCRC 14874 / CCUG 350202 / NBRC 14942 / NCIMB 11054 / UW101</strain>
    </source>
</reference>
<proteinExistence type="inferred from homology"/>
<feature type="chain" id="PRO_1000079794" description="Large ribosomal subunit protein bL12">
    <location>
        <begin position="1"/>
        <end position="123"/>
    </location>
</feature>
<feature type="region of interest" description="Disordered" evidence="2">
    <location>
        <begin position="96"/>
        <end position="123"/>
    </location>
</feature>
<feature type="compositionally biased region" description="Basic and acidic residues" evidence="2">
    <location>
        <begin position="100"/>
        <end position="114"/>
    </location>
</feature>
<accession>A5FIJ2</accession>
<organism>
    <name type="scientific">Flavobacterium johnsoniae (strain ATCC 17061 / DSM 2064 / JCM 8514 / BCRC 14874 / CCUG 350202 / NBRC 14942 / NCIMB 11054 / UW101)</name>
    <name type="common">Cytophaga johnsonae</name>
    <dbReference type="NCBI Taxonomy" id="376686"/>
    <lineage>
        <taxon>Bacteria</taxon>
        <taxon>Pseudomonadati</taxon>
        <taxon>Bacteroidota</taxon>
        <taxon>Flavobacteriia</taxon>
        <taxon>Flavobacteriales</taxon>
        <taxon>Flavobacteriaceae</taxon>
        <taxon>Flavobacterium</taxon>
    </lineage>
</organism>
<protein>
    <recommendedName>
        <fullName evidence="1">Large ribosomal subunit protein bL12</fullName>
    </recommendedName>
    <alternativeName>
        <fullName evidence="3">50S ribosomal protein L7/L12</fullName>
    </alternativeName>
</protein>
<sequence>MADLKQFAEQLVNLTVKEVNELATILKDEYGIEPAAAAVVVAAGGGDGAAEEAQTEFTVVLKDAGASKLAVVKLVKELTGLGLKEAKDVVDGAPSNVKEGVSKEEAEGLKKSLEEAGATVELK</sequence>
<name>RL7_FLAJ1</name>